<comment type="function">
    <text evidence="1">Inhibits cell growth by regulating the TOR signaling pathway upstream of the TSC1-TSC2 complex and downstream of AKT1.</text>
</comment>
<comment type="subcellular location">
    <subcellularLocation>
        <location evidence="1">Cytoplasm</location>
    </subcellularLocation>
</comment>
<comment type="tissue specificity">
    <text evidence="2">Expressed in heart, skeletal muscle and testis.</text>
</comment>
<comment type="induction">
    <text evidence="2">Up-regulated in soleus muscle atrophied by disuse.</text>
</comment>
<comment type="similarity">
    <text evidence="3">Belongs to the DDIT4 family.</text>
</comment>
<feature type="chain" id="PRO_0000307207" description="DNA damage-inducible transcript 4-like protein">
    <location>
        <begin position="1"/>
        <end position="193"/>
    </location>
</feature>
<name>DDT4L_RAT</name>
<keyword id="KW-0963">Cytoplasm</keyword>
<keyword id="KW-1185">Reference proteome</keyword>
<organism>
    <name type="scientific">Rattus norvegicus</name>
    <name type="common">Rat</name>
    <dbReference type="NCBI Taxonomy" id="10116"/>
    <lineage>
        <taxon>Eukaryota</taxon>
        <taxon>Metazoa</taxon>
        <taxon>Chordata</taxon>
        <taxon>Craniata</taxon>
        <taxon>Vertebrata</taxon>
        <taxon>Euteleostomi</taxon>
        <taxon>Mammalia</taxon>
        <taxon>Eutheria</taxon>
        <taxon>Euarchontoglires</taxon>
        <taxon>Glires</taxon>
        <taxon>Rodentia</taxon>
        <taxon>Myomorpha</taxon>
        <taxon>Muroidea</taxon>
        <taxon>Muridae</taxon>
        <taxon>Murinae</taxon>
        <taxon>Rattus</taxon>
    </lineage>
</organism>
<accession>Q8VD50</accession>
<reference key="1">
    <citation type="journal article" date="2001" name="J. Cell. Biochem.">
        <title>Analysis of altered gene expression in rat soleus muscle atrophied by disuse.</title>
        <authorList>
            <person name="Cros N."/>
            <person name="Tkatchenko A.V."/>
            <person name="Pisani D.F."/>
            <person name="Leclerc L."/>
            <person name="Leger J.J."/>
            <person name="Marini J.-F."/>
            <person name="Dechesne C.A."/>
        </authorList>
    </citation>
    <scope>NUCLEOTIDE SEQUENCE [MRNA]</scope>
    <scope>TISSUE SPECIFICITY</scope>
    <scope>INDUCTION</scope>
    <source>
        <strain>Sprague-Dawley</strain>
        <tissue>Skeletal muscle</tissue>
    </source>
</reference>
<dbReference type="EMBL" id="AF327511">
    <property type="protein sequence ID" value="AAL39012.1"/>
    <property type="molecule type" value="mRNA"/>
</dbReference>
<dbReference type="RefSeq" id="NP_001376203.1">
    <property type="nucleotide sequence ID" value="NM_001389274.1"/>
</dbReference>
<dbReference type="RefSeq" id="NP_536324.1">
    <property type="nucleotide sequence ID" value="NM_080399.1"/>
</dbReference>
<dbReference type="RefSeq" id="XP_002729167.1">
    <property type="nucleotide sequence ID" value="XM_002729121.5"/>
</dbReference>
<dbReference type="RefSeq" id="XP_003753712.1">
    <property type="nucleotide sequence ID" value="XM_003753664.4"/>
</dbReference>
<dbReference type="SMR" id="Q8VD50"/>
<dbReference type="FunCoup" id="Q8VD50">
    <property type="interactions" value="78"/>
</dbReference>
<dbReference type="STRING" id="10116.ENSRNOP00000013661"/>
<dbReference type="PhosphoSitePlus" id="Q8VD50"/>
<dbReference type="PaxDb" id="10116-ENSRNOP00000013661"/>
<dbReference type="Ensembl" id="ENSRNOT00000013661.5">
    <property type="protein sequence ID" value="ENSRNOP00000013661.2"/>
    <property type="gene ID" value="ENSRNOG00000010047.5"/>
</dbReference>
<dbReference type="GeneID" id="100363484"/>
<dbReference type="AGR" id="RGD:2322961"/>
<dbReference type="RGD" id="2322961">
    <property type="gene designation" value="Ddit4l"/>
</dbReference>
<dbReference type="eggNOG" id="ENOG502R3EE">
    <property type="taxonomic scope" value="Eukaryota"/>
</dbReference>
<dbReference type="GeneTree" id="ENSGT00530000063652"/>
<dbReference type="HOGENOM" id="CLU_086145_0_0_1"/>
<dbReference type="InParanoid" id="Q8VD50"/>
<dbReference type="OMA" id="VFKQDNC"/>
<dbReference type="PhylomeDB" id="Q8VD50"/>
<dbReference type="TreeFam" id="TF105007"/>
<dbReference type="PRO" id="PR:Q8VD50"/>
<dbReference type="Proteomes" id="UP000002494">
    <property type="component" value="Chromosome 2"/>
</dbReference>
<dbReference type="Bgee" id="ENSRNOG00000010047">
    <property type="expression patterns" value="Expressed in esophagus and 15 other cell types or tissues"/>
</dbReference>
<dbReference type="GO" id="GO:0005737">
    <property type="term" value="C:cytoplasm"/>
    <property type="evidence" value="ECO:0000250"/>
    <property type="project" value="UniProtKB"/>
</dbReference>
<dbReference type="GO" id="GO:0009968">
    <property type="term" value="P:negative regulation of signal transduction"/>
    <property type="evidence" value="ECO:0007669"/>
    <property type="project" value="InterPro"/>
</dbReference>
<dbReference type="FunFam" id="3.90.470.40:FF:000002">
    <property type="entry name" value="DNA damage-inducible transcript 4-like protein"/>
    <property type="match status" value="1"/>
</dbReference>
<dbReference type="Gene3D" id="3.90.470.40">
    <property type="entry name" value="RTP801-like"/>
    <property type="match status" value="1"/>
</dbReference>
<dbReference type="InterPro" id="IPR012918">
    <property type="entry name" value="RTP801-like"/>
</dbReference>
<dbReference type="InterPro" id="IPR038281">
    <property type="entry name" value="RTP801-like_C_sf"/>
</dbReference>
<dbReference type="PANTHER" id="PTHR12478:SF17">
    <property type="entry name" value="DNA DAMAGE-INDUCIBLE TRANSCRIPT 4-LIKE PROTEIN"/>
    <property type="match status" value="1"/>
</dbReference>
<dbReference type="PANTHER" id="PTHR12478">
    <property type="entry name" value="DNA-DAMAGE-INDUCIBLE TRANSCRIPT 4 PROTEIN DDIT4"/>
    <property type="match status" value="1"/>
</dbReference>
<dbReference type="Pfam" id="PF07809">
    <property type="entry name" value="RTP801_C"/>
    <property type="match status" value="1"/>
</dbReference>
<sequence length="193" mass="21400">MVATGSLSSKNTASISELLDGGSHPGSLLSDFDYWDYVVPEPNLNEVVFEETTCQNLVKMLENCLSKSKQTKLGCSKVLVPEKLTQRIAQDVLRLSSTEPCGLRGCVMHVNLEIENVCKKLDRIVCDASVVPTFELTLVFKQESCSWTSLKDFFFSGGRFSSGLRRTLILSSGFRLVKKKLYSLIGTTVIEEC</sequence>
<protein>
    <recommendedName>
        <fullName>DNA damage-inducible transcript 4-like protein</fullName>
    </recommendedName>
    <alternativeName>
        <fullName>Soleus muscle atrophied after hindlimb suspension protein 1</fullName>
    </alternativeName>
</protein>
<proteinExistence type="evidence at transcript level"/>
<evidence type="ECO:0000250" key="1"/>
<evidence type="ECO:0000269" key="2">
    <source>
    </source>
</evidence>
<evidence type="ECO:0000305" key="3"/>
<gene>
    <name type="primary">Ddit4l</name>
    <name type="synonym">Smhs1</name>
</gene>